<feature type="chain" id="PRO_0000204240" description="Regulator of G-protein signaling rgs-6" evidence="3">
    <location>
        <begin position="1"/>
        <end position="734"/>
    </location>
</feature>
<feature type="domain" description="RGS" evidence="1">
    <location>
        <begin position="46"/>
        <end position="157"/>
    </location>
</feature>
<feature type="region of interest" description="Disordered" evidence="2">
    <location>
        <begin position="1"/>
        <end position="24"/>
    </location>
</feature>
<feature type="region of interest" description="Disordered" evidence="2">
    <location>
        <begin position="162"/>
        <end position="236"/>
    </location>
</feature>
<feature type="region of interest" description="Disordered" evidence="2">
    <location>
        <begin position="489"/>
        <end position="515"/>
    </location>
</feature>
<feature type="region of interest" description="Disordered" evidence="2">
    <location>
        <begin position="538"/>
        <end position="734"/>
    </location>
</feature>
<feature type="compositionally biased region" description="Low complexity" evidence="2">
    <location>
        <begin position="8"/>
        <end position="24"/>
    </location>
</feature>
<feature type="compositionally biased region" description="Acidic residues" evidence="2">
    <location>
        <begin position="166"/>
        <end position="176"/>
    </location>
</feature>
<feature type="compositionally biased region" description="Polar residues" evidence="2">
    <location>
        <begin position="180"/>
        <end position="191"/>
    </location>
</feature>
<feature type="compositionally biased region" description="Low complexity" evidence="2">
    <location>
        <begin position="194"/>
        <end position="208"/>
    </location>
</feature>
<feature type="compositionally biased region" description="Polar residues" evidence="2">
    <location>
        <begin position="494"/>
        <end position="506"/>
    </location>
</feature>
<feature type="compositionally biased region" description="Polar residues" evidence="2">
    <location>
        <begin position="538"/>
        <end position="557"/>
    </location>
</feature>
<feature type="compositionally biased region" description="Basic and acidic residues" evidence="2">
    <location>
        <begin position="563"/>
        <end position="585"/>
    </location>
</feature>
<feature type="compositionally biased region" description="Basic and acidic residues" evidence="2">
    <location>
        <begin position="606"/>
        <end position="619"/>
    </location>
</feature>
<feature type="compositionally biased region" description="Low complexity" evidence="2">
    <location>
        <begin position="642"/>
        <end position="694"/>
    </location>
</feature>
<feature type="compositionally biased region" description="Polar residues" evidence="2">
    <location>
        <begin position="705"/>
        <end position="715"/>
    </location>
</feature>
<feature type="compositionally biased region" description="Polar residues" evidence="2">
    <location>
        <begin position="724"/>
        <end position="734"/>
    </location>
</feature>
<feature type="splice variant" id="VSP_059557" description="In isoform b." evidence="3">
    <location>
        <begin position="550"/>
        <end position="563"/>
    </location>
</feature>
<accession>Q18563</accession>
<accession>A0A078BPH3</accession>
<accession>A0A078BQK8</accession>
<accession>Q18562</accession>
<evidence type="ECO:0000255" key="1">
    <source>
        <dbReference type="PROSITE-ProRule" id="PRU00171"/>
    </source>
</evidence>
<evidence type="ECO:0000256" key="2">
    <source>
        <dbReference type="SAM" id="MobiDB-lite"/>
    </source>
</evidence>
<evidence type="ECO:0000305" key="3"/>
<evidence type="ECO:0000312" key="4">
    <source>
        <dbReference type="WormBase" id="C41G11.3a"/>
    </source>
</evidence>
<evidence type="ECO:0000312" key="5">
    <source>
        <dbReference type="WormBase" id="C41G11.3b"/>
    </source>
</evidence>
<name>RGS6_CAEEL</name>
<proteinExistence type="predicted"/>
<protein>
    <recommendedName>
        <fullName evidence="4">Regulator of G-protein signaling rgs-6</fullName>
    </recommendedName>
</protein>
<gene>
    <name evidence="4" type="primary">rgs-6</name>
    <name evidence="4" type="ORF">C41G11.3</name>
</gene>
<sequence length="734" mass="79557">MSTPCSGNEPATPTNTSPNNETSNSCLSMGVGVASNETNSSRELKIFKKVIRDPVLRAPFQEFLEQQFCAENLNFYLAVEQFKEIQDFQERSSFGRRIFDRYFAMNSTEPVNIDNSTSKRIRETVESGGFPLDTYDVAQYQILHLLKYDCWPRFLRSTNNSQPSFTDEELAADDEDKNGHSQPTSLNNTNEFEAAAQQSQPAPNAPAATKEKPSKQYSMPAEMTSPVKKNSLSPTHLRRCRPVEPKHCQLMIGDQFNTETVTLSDPTMSVRRWTQEMADAQGMDRMHVEVVDAETGSTIDPARQAIDALQSRALRLVPVVSFIIEFLPANFSFKNPASTPTKLVCIRARHSLSTGAVLRPLLHKYTLDPQVTRIVLNGSLEQVKRSCAVGQVSQKCLTVMSEAQYSDRVNAGKVSLPPRDPILSQLPSTIYEQNNFPFHQNGDISYCEIPNESERNKHAHLQHDGPNAAHQQKEYTLSIFNKFVRKASHAVSKSDPNPSAGTSQDRMASGVYSPATGGPSFASRAAAGTNFGGSANQVNAGSASTSSNNVSEPSKNRLSIFKSKTEKKVVKPESEKEKLKPRSDDIPTTSTSTPMAVETKPNGSRTTEEPLKRMGKSGDDGSQEPQGIRHPAIFSTKIGDEAAAAAAGASPSTSAPSTSTSVQTKTTTSPTKSPTSTTITTSGTTTSATSSVATAPPPVLHAMRSASTPATSSQLTGGGGGNPRESSWQTAAYV</sequence>
<reference key="1">
    <citation type="journal article" date="1998" name="Science">
        <title>Genome sequence of the nematode C. elegans: a platform for investigating biology.</title>
        <authorList>
            <consortium name="The C. elegans sequencing consortium"/>
        </authorList>
    </citation>
    <scope>NUCLEOTIDE SEQUENCE [LARGE SCALE GENOMIC DNA]</scope>
    <source>
        <strain>Bristol N2</strain>
    </source>
</reference>
<reference key="2">
    <citation type="journal article" date="2000" name="Genes Dev.">
        <title>Multiple RGS proteins alter neural G protein signaling to allow C. elegans to rapidly change behavior when fed.</title>
        <authorList>
            <person name="Dong M.-Q."/>
            <person name="Chase D."/>
            <person name="Patikoglou G.A."/>
            <person name="Koelle M.R."/>
        </authorList>
    </citation>
    <scope>IDENTIFICATION</scope>
</reference>
<organism>
    <name type="scientific">Caenorhabditis elegans</name>
    <dbReference type="NCBI Taxonomy" id="6239"/>
    <lineage>
        <taxon>Eukaryota</taxon>
        <taxon>Metazoa</taxon>
        <taxon>Ecdysozoa</taxon>
        <taxon>Nematoda</taxon>
        <taxon>Chromadorea</taxon>
        <taxon>Rhabditida</taxon>
        <taxon>Rhabditina</taxon>
        <taxon>Rhabditomorpha</taxon>
        <taxon>Rhabditoidea</taxon>
        <taxon>Rhabditidae</taxon>
        <taxon>Peloderinae</taxon>
        <taxon>Caenorhabditis</taxon>
    </lineage>
</organism>
<dbReference type="EMBL" id="BX284606">
    <property type="protein sequence ID" value="CDX47458.1"/>
    <property type="molecule type" value="Genomic_DNA"/>
</dbReference>
<dbReference type="EMBL" id="BX284606">
    <property type="protein sequence ID" value="CDX47459.1"/>
    <property type="molecule type" value="Genomic_DNA"/>
</dbReference>
<dbReference type="PIR" id="T29512">
    <property type="entry name" value="T29512"/>
</dbReference>
<dbReference type="PIR" id="T29513">
    <property type="entry name" value="T29513"/>
</dbReference>
<dbReference type="RefSeq" id="NP_001294820.1">
    <molecule id="Q18563-1"/>
    <property type="nucleotide sequence ID" value="NM_001307891.4"/>
</dbReference>
<dbReference type="RefSeq" id="NP_001294821.1">
    <molecule id="Q18563-2"/>
    <property type="nucleotide sequence ID" value="NM_001307892.4"/>
</dbReference>
<dbReference type="SMR" id="Q18563"/>
<dbReference type="STRING" id="6239.C41G11.3a.1"/>
<dbReference type="PaxDb" id="6239-C41G11.3"/>
<dbReference type="PeptideAtlas" id="Q18563"/>
<dbReference type="EnsemblMetazoa" id="C41G11.3a.1">
    <molecule id="Q18563-1"/>
    <property type="protein sequence ID" value="C41G11.3a.1"/>
    <property type="gene ID" value="WBGene00004349"/>
</dbReference>
<dbReference type="EnsemblMetazoa" id="C41G11.3a.2">
    <molecule id="Q18563-1"/>
    <property type="protein sequence ID" value="C41G11.3a.2"/>
    <property type="gene ID" value="WBGene00004349"/>
</dbReference>
<dbReference type="EnsemblMetazoa" id="C41G11.3a.3">
    <molecule id="Q18563-1"/>
    <property type="protein sequence ID" value="C41G11.3a.3"/>
    <property type="gene ID" value="WBGene00004349"/>
</dbReference>
<dbReference type="EnsemblMetazoa" id="C41G11.3b.1">
    <molecule id="Q18563-2"/>
    <property type="protein sequence ID" value="C41G11.3b.1"/>
    <property type="gene ID" value="WBGene00004349"/>
</dbReference>
<dbReference type="GeneID" id="180840"/>
<dbReference type="KEGG" id="cel:CELE_C41G11.3"/>
<dbReference type="UCSC" id="C41G11.3">
    <molecule id="Q18563-1"/>
    <property type="organism name" value="c. elegans"/>
</dbReference>
<dbReference type="AGR" id="WB:WBGene00004349"/>
<dbReference type="CTD" id="180840"/>
<dbReference type="WormBase" id="C41G11.3a">
    <molecule id="Q18563-1"/>
    <property type="protein sequence ID" value="CE50026"/>
    <property type="gene ID" value="WBGene00004349"/>
    <property type="gene designation" value="rgs-6"/>
</dbReference>
<dbReference type="WormBase" id="C41G11.3b">
    <molecule id="Q18563-2"/>
    <property type="protein sequence ID" value="CE49999"/>
    <property type="gene ID" value="WBGene00004349"/>
    <property type="gene designation" value="rgs-6"/>
</dbReference>
<dbReference type="eggNOG" id="KOG3589">
    <property type="taxonomic scope" value="Eukaryota"/>
</dbReference>
<dbReference type="HOGENOM" id="CLU_384151_0_0_1"/>
<dbReference type="InParanoid" id="Q18563"/>
<dbReference type="OMA" id="FYQHGDV"/>
<dbReference type="OrthoDB" id="196547at2759"/>
<dbReference type="PhylomeDB" id="Q18563"/>
<dbReference type="Reactome" id="R-CEL-416476">
    <property type="pathway name" value="G alpha (q) signalling events"/>
</dbReference>
<dbReference type="Reactome" id="R-CEL-418594">
    <property type="pathway name" value="G alpha (i) signalling events"/>
</dbReference>
<dbReference type="Reactome" id="R-CEL-418597">
    <property type="pathway name" value="G alpha (z) signalling events"/>
</dbReference>
<dbReference type="PRO" id="PR:Q18563"/>
<dbReference type="Proteomes" id="UP000001940">
    <property type="component" value="Chromosome X"/>
</dbReference>
<dbReference type="Bgee" id="WBGene00004349">
    <property type="expression patterns" value="Expressed in pharyngeal muscle cell (C elegans) and 3 other cell types or tissues"/>
</dbReference>
<dbReference type="GO" id="GO:0005096">
    <property type="term" value="F:GTPase activator activity"/>
    <property type="evidence" value="ECO:0007669"/>
    <property type="project" value="InterPro"/>
</dbReference>
<dbReference type="GO" id="GO:0009968">
    <property type="term" value="P:negative regulation of signal transduction"/>
    <property type="evidence" value="ECO:0007669"/>
    <property type="project" value="UniProtKB-KW"/>
</dbReference>
<dbReference type="Gene3D" id="3.10.20.90">
    <property type="entry name" value="Phosphatidylinositol 3-kinase Catalytic Subunit, Chain A, domain 1"/>
    <property type="match status" value="1"/>
</dbReference>
<dbReference type="Gene3D" id="1.10.167.10">
    <property type="entry name" value="Regulator of G-protein Signalling 4, domain 2"/>
    <property type="match status" value="1"/>
</dbReference>
<dbReference type="InterPro" id="IPR016137">
    <property type="entry name" value="RGS"/>
</dbReference>
<dbReference type="InterPro" id="IPR046995">
    <property type="entry name" value="RGS10/12/14-like"/>
</dbReference>
<dbReference type="InterPro" id="IPR036305">
    <property type="entry name" value="RGS_sf"/>
</dbReference>
<dbReference type="InterPro" id="IPR044926">
    <property type="entry name" value="RGS_subdomain_2"/>
</dbReference>
<dbReference type="PANTHER" id="PTHR45945">
    <property type="entry name" value="REGULATOR OF G-PROTEIN SIGNALING LOCO"/>
    <property type="match status" value="1"/>
</dbReference>
<dbReference type="PANTHER" id="PTHR45945:SF3">
    <property type="entry name" value="REGULATOR OF G-PROTEIN SIGNALING LOCO"/>
    <property type="match status" value="1"/>
</dbReference>
<dbReference type="Pfam" id="PF00615">
    <property type="entry name" value="RGS"/>
    <property type="match status" value="1"/>
</dbReference>
<dbReference type="PRINTS" id="PR01301">
    <property type="entry name" value="RGSPROTEIN"/>
</dbReference>
<dbReference type="SMART" id="SM00315">
    <property type="entry name" value="RGS"/>
    <property type="match status" value="1"/>
</dbReference>
<dbReference type="SUPFAM" id="SSF48097">
    <property type="entry name" value="Regulator of G-protein signaling, RGS"/>
    <property type="match status" value="1"/>
</dbReference>
<dbReference type="PROSITE" id="PS50132">
    <property type="entry name" value="RGS"/>
    <property type="match status" value="1"/>
</dbReference>
<comment type="alternative products">
    <event type="alternative splicing"/>
    <isoform>
        <id>Q18563-1</id>
        <name evidence="4">a</name>
        <sequence type="displayed"/>
    </isoform>
    <isoform>
        <id>Q18563-2</id>
        <name evidence="5">b</name>
        <sequence type="described" ref="VSP_059557"/>
    </isoform>
</comment>
<keyword id="KW-0025">Alternative splicing</keyword>
<keyword id="KW-1185">Reference proteome</keyword>
<keyword id="KW-0734">Signal transduction inhibitor</keyword>